<protein>
    <recommendedName>
        <fullName evidence="1">Holliday junction branch migration complex subunit RuvA</fullName>
    </recommendedName>
</protein>
<name>RUVA_BACC1</name>
<evidence type="ECO:0000255" key="1">
    <source>
        <dbReference type="HAMAP-Rule" id="MF_00031"/>
    </source>
</evidence>
<comment type="function">
    <text evidence="1">The RuvA-RuvB-RuvC complex processes Holliday junction (HJ) DNA during genetic recombination and DNA repair, while the RuvA-RuvB complex plays an important role in the rescue of blocked DNA replication forks via replication fork reversal (RFR). RuvA specifically binds to HJ cruciform DNA, conferring on it an open structure. The RuvB hexamer acts as an ATP-dependent pump, pulling dsDNA into and through the RuvAB complex. HJ branch migration allows RuvC to scan DNA until it finds its consensus sequence, where it cleaves and resolves the cruciform DNA.</text>
</comment>
<comment type="subunit">
    <text evidence="1">Homotetramer. Forms an RuvA(8)-RuvB(12)-Holliday junction (HJ) complex. HJ DNA is sandwiched between 2 RuvA tetramers; dsDNA enters through RuvA and exits via RuvB. An RuvB hexamer assembles on each DNA strand where it exits the tetramer. Each RuvB hexamer is contacted by two RuvA subunits (via domain III) on 2 adjacent RuvB subunits; this complex drives branch migration. In the full resolvosome a probable DNA-RuvA(4)-RuvB(12)-RuvC(2) complex forms which resolves the HJ.</text>
</comment>
<comment type="subcellular location">
    <subcellularLocation>
        <location evidence="1">Cytoplasm</location>
    </subcellularLocation>
</comment>
<comment type="domain">
    <text evidence="1">Has three domains with a flexible linker between the domains II and III and assumes an 'L' shape. Domain III is highly mobile and contacts RuvB.</text>
</comment>
<comment type="similarity">
    <text evidence="1">Belongs to the RuvA family.</text>
</comment>
<proteinExistence type="inferred from homology"/>
<reference key="1">
    <citation type="journal article" date="2004" name="Nucleic Acids Res.">
        <title>The genome sequence of Bacillus cereus ATCC 10987 reveals metabolic adaptations and a large plasmid related to Bacillus anthracis pXO1.</title>
        <authorList>
            <person name="Rasko D.A."/>
            <person name="Ravel J."/>
            <person name="Oekstad O.A."/>
            <person name="Helgason E."/>
            <person name="Cer R.Z."/>
            <person name="Jiang L."/>
            <person name="Shores K.A."/>
            <person name="Fouts D.E."/>
            <person name="Tourasse N.J."/>
            <person name="Angiuoli S.V."/>
            <person name="Kolonay J.F."/>
            <person name="Nelson W.C."/>
            <person name="Kolstoe A.-B."/>
            <person name="Fraser C.M."/>
            <person name="Read T.D."/>
        </authorList>
    </citation>
    <scope>NUCLEOTIDE SEQUENCE [LARGE SCALE GENOMIC DNA]</scope>
    <source>
        <strain>ATCC 10987 / NRS 248</strain>
    </source>
</reference>
<organism>
    <name type="scientific">Bacillus cereus (strain ATCC 10987 / NRS 248)</name>
    <dbReference type="NCBI Taxonomy" id="222523"/>
    <lineage>
        <taxon>Bacteria</taxon>
        <taxon>Bacillati</taxon>
        <taxon>Bacillota</taxon>
        <taxon>Bacilli</taxon>
        <taxon>Bacillales</taxon>
        <taxon>Bacillaceae</taxon>
        <taxon>Bacillus</taxon>
        <taxon>Bacillus cereus group</taxon>
    </lineage>
</organism>
<accession>Q730B1</accession>
<keyword id="KW-0963">Cytoplasm</keyword>
<keyword id="KW-0227">DNA damage</keyword>
<keyword id="KW-0233">DNA recombination</keyword>
<keyword id="KW-0234">DNA repair</keyword>
<keyword id="KW-0238">DNA-binding</keyword>
<gene>
    <name evidence="1" type="primary">ruvA</name>
    <name type="ordered locus">BCE_4506</name>
</gene>
<dbReference type="EMBL" id="AE017194">
    <property type="protein sequence ID" value="AAS43407.1"/>
    <property type="molecule type" value="Genomic_DNA"/>
</dbReference>
<dbReference type="SMR" id="Q730B1"/>
<dbReference type="KEGG" id="bca:BCE_4506"/>
<dbReference type="HOGENOM" id="CLU_087936_1_0_9"/>
<dbReference type="Proteomes" id="UP000002527">
    <property type="component" value="Chromosome"/>
</dbReference>
<dbReference type="GO" id="GO:0005737">
    <property type="term" value="C:cytoplasm"/>
    <property type="evidence" value="ECO:0007669"/>
    <property type="project" value="UniProtKB-SubCell"/>
</dbReference>
<dbReference type="GO" id="GO:0009379">
    <property type="term" value="C:Holliday junction helicase complex"/>
    <property type="evidence" value="ECO:0007669"/>
    <property type="project" value="InterPro"/>
</dbReference>
<dbReference type="GO" id="GO:0048476">
    <property type="term" value="C:Holliday junction resolvase complex"/>
    <property type="evidence" value="ECO:0007669"/>
    <property type="project" value="UniProtKB-UniRule"/>
</dbReference>
<dbReference type="GO" id="GO:0005524">
    <property type="term" value="F:ATP binding"/>
    <property type="evidence" value="ECO:0007669"/>
    <property type="project" value="InterPro"/>
</dbReference>
<dbReference type="GO" id="GO:0000400">
    <property type="term" value="F:four-way junction DNA binding"/>
    <property type="evidence" value="ECO:0007669"/>
    <property type="project" value="UniProtKB-UniRule"/>
</dbReference>
<dbReference type="GO" id="GO:0009378">
    <property type="term" value="F:four-way junction helicase activity"/>
    <property type="evidence" value="ECO:0007669"/>
    <property type="project" value="InterPro"/>
</dbReference>
<dbReference type="GO" id="GO:0006310">
    <property type="term" value="P:DNA recombination"/>
    <property type="evidence" value="ECO:0007669"/>
    <property type="project" value="UniProtKB-UniRule"/>
</dbReference>
<dbReference type="GO" id="GO:0006281">
    <property type="term" value="P:DNA repair"/>
    <property type="evidence" value="ECO:0007669"/>
    <property type="project" value="UniProtKB-UniRule"/>
</dbReference>
<dbReference type="CDD" id="cd14332">
    <property type="entry name" value="UBA_RuvA_C"/>
    <property type="match status" value="1"/>
</dbReference>
<dbReference type="Gene3D" id="1.10.150.20">
    <property type="entry name" value="5' to 3' exonuclease, C-terminal subdomain"/>
    <property type="match status" value="1"/>
</dbReference>
<dbReference type="Gene3D" id="1.10.8.10">
    <property type="entry name" value="DNA helicase RuvA subunit, C-terminal domain"/>
    <property type="match status" value="1"/>
</dbReference>
<dbReference type="Gene3D" id="2.40.50.140">
    <property type="entry name" value="Nucleic acid-binding proteins"/>
    <property type="match status" value="1"/>
</dbReference>
<dbReference type="HAMAP" id="MF_00031">
    <property type="entry name" value="DNA_HJ_migration_RuvA"/>
    <property type="match status" value="1"/>
</dbReference>
<dbReference type="InterPro" id="IPR013849">
    <property type="entry name" value="DNA_helicase_Holl-junc_RuvA_I"/>
</dbReference>
<dbReference type="InterPro" id="IPR003583">
    <property type="entry name" value="Hlx-hairpin-Hlx_DNA-bd_motif"/>
</dbReference>
<dbReference type="InterPro" id="IPR012340">
    <property type="entry name" value="NA-bd_OB-fold"/>
</dbReference>
<dbReference type="InterPro" id="IPR000085">
    <property type="entry name" value="RuvA"/>
</dbReference>
<dbReference type="InterPro" id="IPR010994">
    <property type="entry name" value="RuvA_2-like"/>
</dbReference>
<dbReference type="InterPro" id="IPR011114">
    <property type="entry name" value="RuvA_C"/>
</dbReference>
<dbReference type="InterPro" id="IPR036267">
    <property type="entry name" value="RuvA_C_sf"/>
</dbReference>
<dbReference type="NCBIfam" id="TIGR00084">
    <property type="entry name" value="ruvA"/>
    <property type="match status" value="1"/>
</dbReference>
<dbReference type="Pfam" id="PF14520">
    <property type="entry name" value="HHH_5"/>
    <property type="match status" value="1"/>
</dbReference>
<dbReference type="Pfam" id="PF07499">
    <property type="entry name" value="RuvA_C"/>
    <property type="match status" value="1"/>
</dbReference>
<dbReference type="Pfam" id="PF01330">
    <property type="entry name" value="RuvA_N"/>
    <property type="match status" value="1"/>
</dbReference>
<dbReference type="SMART" id="SM00278">
    <property type="entry name" value="HhH1"/>
    <property type="match status" value="2"/>
</dbReference>
<dbReference type="SUPFAM" id="SSF46929">
    <property type="entry name" value="DNA helicase RuvA subunit, C-terminal domain"/>
    <property type="match status" value="1"/>
</dbReference>
<dbReference type="SUPFAM" id="SSF50249">
    <property type="entry name" value="Nucleic acid-binding proteins"/>
    <property type="match status" value="1"/>
</dbReference>
<dbReference type="SUPFAM" id="SSF47781">
    <property type="entry name" value="RuvA domain 2-like"/>
    <property type="match status" value="1"/>
</dbReference>
<feature type="chain" id="PRO_0000224837" description="Holliday junction branch migration complex subunit RuvA">
    <location>
        <begin position="1"/>
        <end position="205"/>
    </location>
</feature>
<feature type="region of interest" description="Domain I" evidence="1">
    <location>
        <begin position="1"/>
        <end position="62"/>
    </location>
</feature>
<feature type="region of interest" description="Domain II" evidence="1">
    <location>
        <begin position="63"/>
        <end position="141"/>
    </location>
</feature>
<feature type="region of interest" description="Flexible linker" evidence="1">
    <location>
        <begin position="142"/>
        <end position="152"/>
    </location>
</feature>
<feature type="region of interest" description="Domain III" evidence="1">
    <location>
        <begin position="153"/>
        <end position="205"/>
    </location>
</feature>
<sequence length="205" mass="23194">MFEYVTGYVEYVGPEYVVIDHNGIGYQIFTPNPYVFQRSKQEIRVYTYHYVREDIMALYGFKTREERLLFTKLLGVSGIGPKGALAILASGQTGQVVQAIEHEDEKFLVKFPGVGKKTARQMILDLKGKLADVVPDAFVDLFSDEERFDEKKGSSAELDEALEALRALGYAEREVSRVVPELLKESLTTDQYIKKALSLLLNGKR</sequence>